<organism>
    <name type="scientific">Bradyrhizobium sp. (strain ORS 278)</name>
    <dbReference type="NCBI Taxonomy" id="114615"/>
    <lineage>
        <taxon>Bacteria</taxon>
        <taxon>Pseudomonadati</taxon>
        <taxon>Pseudomonadota</taxon>
        <taxon>Alphaproteobacteria</taxon>
        <taxon>Hyphomicrobiales</taxon>
        <taxon>Nitrobacteraceae</taxon>
        <taxon>Bradyrhizobium</taxon>
    </lineage>
</organism>
<reference key="1">
    <citation type="journal article" date="2007" name="Science">
        <title>Legumes symbioses: absence of nod genes in photosynthetic bradyrhizobia.</title>
        <authorList>
            <person name="Giraud E."/>
            <person name="Moulin L."/>
            <person name="Vallenet D."/>
            <person name="Barbe V."/>
            <person name="Cytryn E."/>
            <person name="Avarre J.-C."/>
            <person name="Jaubert M."/>
            <person name="Simon D."/>
            <person name="Cartieaux F."/>
            <person name="Prin Y."/>
            <person name="Bena G."/>
            <person name="Hannibal L."/>
            <person name="Fardoux J."/>
            <person name="Kojadinovic M."/>
            <person name="Vuillet L."/>
            <person name="Lajus A."/>
            <person name="Cruveiller S."/>
            <person name="Rouy Z."/>
            <person name="Mangenot S."/>
            <person name="Segurens B."/>
            <person name="Dossat C."/>
            <person name="Franck W.L."/>
            <person name="Chang W.-S."/>
            <person name="Saunders E."/>
            <person name="Bruce D."/>
            <person name="Richardson P."/>
            <person name="Normand P."/>
            <person name="Dreyfus B."/>
            <person name="Pignol D."/>
            <person name="Stacey G."/>
            <person name="Emerich D."/>
            <person name="Vermeglio A."/>
            <person name="Medigue C."/>
            <person name="Sadowsky M."/>
        </authorList>
    </citation>
    <scope>NUCLEOTIDE SEQUENCE [LARGE SCALE GENOMIC DNA]</scope>
    <source>
        <strain>ORS 278</strain>
    </source>
</reference>
<comment type="function">
    <text evidence="1">Allows the formation of correctly charged Asn-tRNA(Asn) or Gln-tRNA(Gln) through the transamidation of misacylated Asp-tRNA(Asn) or Glu-tRNA(Gln) in organisms which lack either or both of asparaginyl-tRNA or glutaminyl-tRNA synthetases. The reaction takes place in the presence of glutamine and ATP through an activated phospho-Asp-tRNA(Asn) or phospho-Glu-tRNA(Gln).</text>
</comment>
<comment type="catalytic activity">
    <reaction evidence="1">
        <text>L-glutamyl-tRNA(Gln) + L-glutamine + ATP + H2O = L-glutaminyl-tRNA(Gln) + L-glutamate + ADP + phosphate + H(+)</text>
        <dbReference type="Rhea" id="RHEA:17521"/>
        <dbReference type="Rhea" id="RHEA-COMP:9681"/>
        <dbReference type="Rhea" id="RHEA-COMP:9684"/>
        <dbReference type="ChEBI" id="CHEBI:15377"/>
        <dbReference type="ChEBI" id="CHEBI:15378"/>
        <dbReference type="ChEBI" id="CHEBI:29985"/>
        <dbReference type="ChEBI" id="CHEBI:30616"/>
        <dbReference type="ChEBI" id="CHEBI:43474"/>
        <dbReference type="ChEBI" id="CHEBI:58359"/>
        <dbReference type="ChEBI" id="CHEBI:78520"/>
        <dbReference type="ChEBI" id="CHEBI:78521"/>
        <dbReference type="ChEBI" id="CHEBI:456216"/>
    </reaction>
</comment>
<comment type="catalytic activity">
    <reaction evidence="1">
        <text>L-aspartyl-tRNA(Asn) + L-glutamine + ATP + H2O = L-asparaginyl-tRNA(Asn) + L-glutamate + ADP + phosphate + 2 H(+)</text>
        <dbReference type="Rhea" id="RHEA:14513"/>
        <dbReference type="Rhea" id="RHEA-COMP:9674"/>
        <dbReference type="Rhea" id="RHEA-COMP:9677"/>
        <dbReference type="ChEBI" id="CHEBI:15377"/>
        <dbReference type="ChEBI" id="CHEBI:15378"/>
        <dbReference type="ChEBI" id="CHEBI:29985"/>
        <dbReference type="ChEBI" id="CHEBI:30616"/>
        <dbReference type="ChEBI" id="CHEBI:43474"/>
        <dbReference type="ChEBI" id="CHEBI:58359"/>
        <dbReference type="ChEBI" id="CHEBI:78515"/>
        <dbReference type="ChEBI" id="CHEBI:78516"/>
        <dbReference type="ChEBI" id="CHEBI:456216"/>
    </reaction>
</comment>
<comment type="subunit">
    <text evidence="1">Heterotrimer of A, B and C subunits.</text>
</comment>
<comment type="similarity">
    <text evidence="1">Belongs to the GatC family.</text>
</comment>
<sequence>MSVDAATVRKIAQLARIAVTDAEVPHLQGELNAMLAFVEQLSEVNVEGVEPMTSVTPMAMKKRQDVVTEGDIADDIVKNAPMTENNFFLVPKVVE</sequence>
<evidence type="ECO:0000255" key="1">
    <source>
        <dbReference type="HAMAP-Rule" id="MF_00122"/>
    </source>
</evidence>
<protein>
    <recommendedName>
        <fullName evidence="1">Aspartyl/glutamyl-tRNA(Asn/Gln) amidotransferase subunit C</fullName>
        <shortName evidence="1">Asp/Glu-ADT subunit C</shortName>
        <ecNumber evidence="1">6.3.5.-</ecNumber>
    </recommendedName>
</protein>
<name>GATC_BRASO</name>
<keyword id="KW-0067">ATP-binding</keyword>
<keyword id="KW-0436">Ligase</keyword>
<keyword id="KW-0547">Nucleotide-binding</keyword>
<keyword id="KW-0648">Protein biosynthesis</keyword>
<keyword id="KW-1185">Reference proteome</keyword>
<gene>
    <name evidence="1" type="primary">gatC</name>
    <name type="ordered locus">BRADO4491</name>
</gene>
<dbReference type="EC" id="6.3.5.-" evidence="1"/>
<dbReference type="EMBL" id="CU234118">
    <property type="protein sequence ID" value="CAL78229.1"/>
    <property type="molecule type" value="Genomic_DNA"/>
</dbReference>
<dbReference type="RefSeq" id="WP_011927339.1">
    <property type="nucleotide sequence ID" value="NC_009445.1"/>
</dbReference>
<dbReference type="SMR" id="A4YWF3"/>
<dbReference type="STRING" id="114615.BRADO4491"/>
<dbReference type="KEGG" id="bra:BRADO4491"/>
<dbReference type="eggNOG" id="COG0721">
    <property type="taxonomic scope" value="Bacteria"/>
</dbReference>
<dbReference type="HOGENOM" id="CLU_105899_2_0_5"/>
<dbReference type="OrthoDB" id="9794326at2"/>
<dbReference type="Proteomes" id="UP000001994">
    <property type="component" value="Chromosome"/>
</dbReference>
<dbReference type="GO" id="GO:0050566">
    <property type="term" value="F:asparaginyl-tRNA synthase (glutamine-hydrolyzing) activity"/>
    <property type="evidence" value="ECO:0007669"/>
    <property type="project" value="RHEA"/>
</dbReference>
<dbReference type="GO" id="GO:0005524">
    <property type="term" value="F:ATP binding"/>
    <property type="evidence" value="ECO:0007669"/>
    <property type="project" value="UniProtKB-KW"/>
</dbReference>
<dbReference type="GO" id="GO:0050567">
    <property type="term" value="F:glutaminyl-tRNA synthase (glutamine-hydrolyzing) activity"/>
    <property type="evidence" value="ECO:0007669"/>
    <property type="project" value="UniProtKB-UniRule"/>
</dbReference>
<dbReference type="GO" id="GO:0070681">
    <property type="term" value="P:glutaminyl-tRNAGln biosynthesis via transamidation"/>
    <property type="evidence" value="ECO:0007669"/>
    <property type="project" value="TreeGrafter"/>
</dbReference>
<dbReference type="GO" id="GO:0006450">
    <property type="term" value="P:regulation of translational fidelity"/>
    <property type="evidence" value="ECO:0007669"/>
    <property type="project" value="InterPro"/>
</dbReference>
<dbReference type="GO" id="GO:0006412">
    <property type="term" value="P:translation"/>
    <property type="evidence" value="ECO:0007669"/>
    <property type="project" value="UniProtKB-UniRule"/>
</dbReference>
<dbReference type="Gene3D" id="1.10.20.60">
    <property type="entry name" value="Glu-tRNAGln amidotransferase C subunit, N-terminal domain"/>
    <property type="match status" value="1"/>
</dbReference>
<dbReference type="HAMAP" id="MF_00122">
    <property type="entry name" value="GatC"/>
    <property type="match status" value="1"/>
</dbReference>
<dbReference type="InterPro" id="IPR036113">
    <property type="entry name" value="Asp/Glu-ADT_sf_sub_c"/>
</dbReference>
<dbReference type="InterPro" id="IPR003837">
    <property type="entry name" value="GatC"/>
</dbReference>
<dbReference type="NCBIfam" id="TIGR00135">
    <property type="entry name" value="gatC"/>
    <property type="match status" value="1"/>
</dbReference>
<dbReference type="PANTHER" id="PTHR15004">
    <property type="entry name" value="GLUTAMYL-TRNA(GLN) AMIDOTRANSFERASE SUBUNIT C, MITOCHONDRIAL"/>
    <property type="match status" value="1"/>
</dbReference>
<dbReference type="PANTHER" id="PTHR15004:SF0">
    <property type="entry name" value="GLUTAMYL-TRNA(GLN) AMIDOTRANSFERASE SUBUNIT C, MITOCHONDRIAL"/>
    <property type="match status" value="1"/>
</dbReference>
<dbReference type="Pfam" id="PF02686">
    <property type="entry name" value="GatC"/>
    <property type="match status" value="1"/>
</dbReference>
<dbReference type="SUPFAM" id="SSF141000">
    <property type="entry name" value="Glu-tRNAGln amidotransferase C subunit"/>
    <property type="match status" value="1"/>
</dbReference>
<accession>A4YWF3</accession>
<feature type="chain" id="PRO_1000016079" description="Aspartyl/glutamyl-tRNA(Asn/Gln) amidotransferase subunit C">
    <location>
        <begin position="1"/>
        <end position="95"/>
    </location>
</feature>
<proteinExistence type="inferred from homology"/>